<reference key="1">
    <citation type="journal article" date="2005" name="Nature">
        <title>The genome of the social amoeba Dictyostelium discoideum.</title>
        <authorList>
            <person name="Eichinger L."/>
            <person name="Pachebat J.A."/>
            <person name="Gloeckner G."/>
            <person name="Rajandream M.A."/>
            <person name="Sucgang R."/>
            <person name="Berriman M."/>
            <person name="Song J."/>
            <person name="Olsen R."/>
            <person name="Szafranski K."/>
            <person name="Xu Q."/>
            <person name="Tunggal B."/>
            <person name="Kummerfeld S."/>
            <person name="Madera M."/>
            <person name="Konfortov B.A."/>
            <person name="Rivero F."/>
            <person name="Bankier A.T."/>
            <person name="Lehmann R."/>
            <person name="Hamlin N."/>
            <person name="Davies R."/>
            <person name="Gaudet P."/>
            <person name="Fey P."/>
            <person name="Pilcher K."/>
            <person name="Chen G."/>
            <person name="Saunders D."/>
            <person name="Sodergren E.J."/>
            <person name="Davis P."/>
            <person name="Kerhornou A."/>
            <person name="Nie X."/>
            <person name="Hall N."/>
            <person name="Anjard C."/>
            <person name="Hemphill L."/>
            <person name="Bason N."/>
            <person name="Farbrother P."/>
            <person name="Desany B."/>
            <person name="Just E."/>
            <person name="Morio T."/>
            <person name="Rost R."/>
            <person name="Churcher C.M."/>
            <person name="Cooper J."/>
            <person name="Haydock S."/>
            <person name="van Driessche N."/>
            <person name="Cronin A."/>
            <person name="Goodhead I."/>
            <person name="Muzny D.M."/>
            <person name="Mourier T."/>
            <person name="Pain A."/>
            <person name="Lu M."/>
            <person name="Harper D."/>
            <person name="Lindsay R."/>
            <person name="Hauser H."/>
            <person name="James K.D."/>
            <person name="Quiles M."/>
            <person name="Madan Babu M."/>
            <person name="Saito T."/>
            <person name="Buchrieser C."/>
            <person name="Wardroper A."/>
            <person name="Felder M."/>
            <person name="Thangavelu M."/>
            <person name="Johnson D."/>
            <person name="Knights A."/>
            <person name="Loulseged H."/>
            <person name="Mungall K.L."/>
            <person name="Oliver K."/>
            <person name="Price C."/>
            <person name="Quail M.A."/>
            <person name="Urushihara H."/>
            <person name="Hernandez J."/>
            <person name="Rabbinowitsch E."/>
            <person name="Steffen D."/>
            <person name="Sanders M."/>
            <person name="Ma J."/>
            <person name="Kohara Y."/>
            <person name="Sharp S."/>
            <person name="Simmonds M.N."/>
            <person name="Spiegler S."/>
            <person name="Tivey A."/>
            <person name="Sugano S."/>
            <person name="White B."/>
            <person name="Walker D."/>
            <person name="Woodward J.R."/>
            <person name="Winckler T."/>
            <person name="Tanaka Y."/>
            <person name="Shaulsky G."/>
            <person name="Schleicher M."/>
            <person name="Weinstock G.M."/>
            <person name="Rosenthal A."/>
            <person name="Cox E.C."/>
            <person name="Chisholm R.L."/>
            <person name="Gibbs R.A."/>
            <person name="Loomis W.F."/>
            <person name="Platzer M."/>
            <person name="Kay R.R."/>
            <person name="Williams J.G."/>
            <person name="Dear P.H."/>
            <person name="Noegel A.A."/>
            <person name="Barrell B.G."/>
            <person name="Kuspa A."/>
        </authorList>
    </citation>
    <scope>NUCLEOTIDE SEQUENCE [LARGE SCALE GENOMIC DNA]</scope>
    <source>
        <strain>AX4</strain>
    </source>
</reference>
<keyword id="KW-0963">Cytoplasm</keyword>
<keyword id="KW-0507">mRNA processing</keyword>
<keyword id="KW-0508">mRNA splicing</keyword>
<keyword id="KW-0539">Nucleus</keyword>
<keyword id="KW-1185">Reference proteome</keyword>
<keyword id="KW-0687">Ribonucleoprotein</keyword>
<keyword id="KW-0694">RNA-binding</keyword>
<keyword id="KW-0747">Spliceosome</keyword>
<feature type="chain" id="PRO_0000348241" description="Probable small nuclear ribonucleoprotein G">
    <location>
        <begin position="1"/>
        <end position="85"/>
    </location>
</feature>
<feature type="domain" description="Sm" evidence="2">
    <location>
        <begin position="6"/>
        <end position="78"/>
    </location>
</feature>
<name>RUXG_DICDI</name>
<proteinExistence type="inferred from homology"/>
<gene>
    <name type="primary">snrpG</name>
    <name type="ORF">DDB_G0282863</name>
</gene>
<comment type="function">
    <text evidence="1">Plays a role in pre-mRNA splicing as a core component of the spliceosomal U1, U2, U4 and U5 small nuclear ribonucleoproteins (snRNPs), the building blocks of the spliceosome. Component of both the pre-catalytic spliceosome B complex and activated spliceosome C complexes. Is also a component of the minor U12 spliceosome.</text>
</comment>
<comment type="subunit">
    <text evidence="1">Core component of the spliceosomal U1, U2, U4 and U5 small nuclear ribonucleoproteins (snRNPs), the building blocks of the spliceosome. Most spliceosomal snRNPs contain a common set of Sm proteins, SNRPB, SNRPD1, SNRPD2, SNRPD3, SNRPE, SNRPF and SNRPG that assemble in a heptameric protein ring on the Sm site of the small nuclear RNA to form the core snRNP. Component of the U1 snRNP. Component of the U4/U6-U5 tri-snRNP complex. Component of the U7 snRNP complex. Component of the U11/U12 snRNPs that are part of the U12-type spliceosome.</text>
</comment>
<comment type="subcellular location">
    <subcellularLocation>
        <location evidence="1">Cytoplasm</location>
        <location evidence="1">Cytosol</location>
    </subcellularLocation>
    <subcellularLocation>
        <location evidence="1">Nucleus</location>
    </subcellularLocation>
    <text evidence="1">SMN-mediated assembly into core snRNPs occurs in the cytosol before SMN-mediated transport to the nucleus to be included in spliceosomes.</text>
</comment>
<comment type="similarity">
    <text evidence="3">Belongs to the snRNP Sm proteins family.</text>
</comment>
<organism>
    <name type="scientific">Dictyostelium discoideum</name>
    <name type="common">Social amoeba</name>
    <dbReference type="NCBI Taxonomy" id="44689"/>
    <lineage>
        <taxon>Eukaryota</taxon>
        <taxon>Amoebozoa</taxon>
        <taxon>Evosea</taxon>
        <taxon>Eumycetozoa</taxon>
        <taxon>Dictyostelia</taxon>
        <taxon>Dictyosteliales</taxon>
        <taxon>Dictyosteliaceae</taxon>
        <taxon>Dictyostelium</taxon>
    </lineage>
</organism>
<evidence type="ECO:0000250" key="1">
    <source>
        <dbReference type="UniProtKB" id="P62308"/>
    </source>
</evidence>
<evidence type="ECO:0000255" key="2">
    <source>
        <dbReference type="PROSITE-ProRule" id="PRU01346"/>
    </source>
</evidence>
<evidence type="ECO:0000305" key="3"/>
<dbReference type="EMBL" id="AAFI02000047">
    <property type="protein sequence ID" value="EAL66011.1"/>
    <property type="molecule type" value="Genomic_DNA"/>
</dbReference>
<dbReference type="RefSeq" id="XP_639367.1">
    <property type="nucleotide sequence ID" value="XM_634275.1"/>
</dbReference>
<dbReference type="SMR" id="Q54RX0"/>
<dbReference type="FunCoup" id="Q54RX0">
    <property type="interactions" value="681"/>
</dbReference>
<dbReference type="STRING" id="44689.Q54RX0"/>
<dbReference type="PaxDb" id="44689-DDB0233197"/>
<dbReference type="EnsemblProtists" id="EAL66011">
    <property type="protein sequence ID" value="EAL66011"/>
    <property type="gene ID" value="DDB_G0282863"/>
</dbReference>
<dbReference type="GeneID" id="8623807"/>
<dbReference type="KEGG" id="ddi:DDB_G0282863"/>
<dbReference type="dictyBase" id="DDB_G0282863">
    <property type="gene designation" value="snrpG"/>
</dbReference>
<dbReference type="VEuPathDB" id="AmoebaDB:DDB_G0282863"/>
<dbReference type="eggNOG" id="KOG1780">
    <property type="taxonomic scope" value="Eukaryota"/>
</dbReference>
<dbReference type="HOGENOM" id="CLU_076902_10_1_1"/>
<dbReference type="InParanoid" id="Q54RX0"/>
<dbReference type="OMA" id="MSKAQPP"/>
<dbReference type="PhylomeDB" id="Q54RX0"/>
<dbReference type="Reactome" id="R-DDI-111367">
    <property type="pathway name" value="SLBP independent Processing of Histone Pre-mRNAs"/>
</dbReference>
<dbReference type="Reactome" id="R-DDI-72163">
    <property type="pathway name" value="mRNA Splicing - Major Pathway"/>
</dbReference>
<dbReference type="Reactome" id="R-DDI-73856">
    <property type="pathway name" value="RNA Polymerase II Transcription Termination"/>
</dbReference>
<dbReference type="Reactome" id="R-DDI-77588">
    <property type="pathway name" value="SLBP Dependent Processing of Replication-Dependent Histone Pre-mRNAs"/>
</dbReference>
<dbReference type="PRO" id="PR:Q54RX0"/>
<dbReference type="Proteomes" id="UP000002195">
    <property type="component" value="Chromosome 3"/>
</dbReference>
<dbReference type="GO" id="GO:0071013">
    <property type="term" value="C:catalytic step 2 spliceosome"/>
    <property type="evidence" value="ECO:0000318"/>
    <property type="project" value="GO_Central"/>
</dbReference>
<dbReference type="GO" id="GO:0005829">
    <property type="term" value="C:cytosol"/>
    <property type="evidence" value="ECO:0007669"/>
    <property type="project" value="UniProtKB-SubCell"/>
</dbReference>
<dbReference type="GO" id="GO:0043186">
    <property type="term" value="C:P granule"/>
    <property type="evidence" value="ECO:0000318"/>
    <property type="project" value="GO_Central"/>
</dbReference>
<dbReference type="GO" id="GO:0071011">
    <property type="term" value="C:precatalytic spliceosome"/>
    <property type="evidence" value="ECO:0000318"/>
    <property type="project" value="GO_Central"/>
</dbReference>
<dbReference type="GO" id="GO:0034719">
    <property type="term" value="C:SMN-Sm protein complex"/>
    <property type="evidence" value="ECO:0000318"/>
    <property type="project" value="GO_Central"/>
</dbReference>
<dbReference type="GO" id="GO:0097526">
    <property type="term" value="C:spliceosomal tri-snRNP complex"/>
    <property type="evidence" value="ECO:0000318"/>
    <property type="project" value="GO_Central"/>
</dbReference>
<dbReference type="GO" id="GO:0005685">
    <property type="term" value="C:U1 snRNP"/>
    <property type="evidence" value="ECO:0000250"/>
    <property type="project" value="UniProtKB"/>
</dbReference>
<dbReference type="GO" id="GO:0005689">
    <property type="term" value="C:U12-type spliceosomal complex"/>
    <property type="evidence" value="ECO:0000318"/>
    <property type="project" value="GO_Central"/>
</dbReference>
<dbReference type="GO" id="GO:0005686">
    <property type="term" value="C:U2 snRNP"/>
    <property type="evidence" value="ECO:0000318"/>
    <property type="project" value="GO_Central"/>
</dbReference>
<dbReference type="GO" id="GO:0071004">
    <property type="term" value="C:U2-type prespliceosome"/>
    <property type="evidence" value="ECO:0000318"/>
    <property type="project" value="GO_Central"/>
</dbReference>
<dbReference type="GO" id="GO:0005687">
    <property type="term" value="C:U4 snRNP"/>
    <property type="evidence" value="ECO:0000250"/>
    <property type="project" value="UniProtKB"/>
</dbReference>
<dbReference type="GO" id="GO:0005682">
    <property type="term" value="C:U5 snRNP"/>
    <property type="evidence" value="ECO:0000318"/>
    <property type="project" value="GO_Central"/>
</dbReference>
<dbReference type="GO" id="GO:0003723">
    <property type="term" value="F:RNA binding"/>
    <property type="evidence" value="ECO:0007669"/>
    <property type="project" value="UniProtKB-KW"/>
</dbReference>
<dbReference type="GO" id="GO:0000398">
    <property type="term" value="P:mRNA splicing, via spliceosome"/>
    <property type="evidence" value="ECO:0000318"/>
    <property type="project" value="GO_Central"/>
</dbReference>
<dbReference type="CDD" id="cd01719">
    <property type="entry name" value="Sm_G"/>
    <property type="match status" value="1"/>
</dbReference>
<dbReference type="FunFam" id="2.30.30.100:FF:000183">
    <property type="entry name" value="Probable small nuclear ribonucleoprotein G"/>
    <property type="match status" value="1"/>
</dbReference>
<dbReference type="Gene3D" id="2.30.30.100">
    <property type="match status" value="1"/>
</dbReference>
<dbReference type="InterPro" id="IPR044641">
    <property type="entry name" value="Lsm7/SmG-like"/>
</dbReference>
<dbReference type="InterPro" id="IPR010920">
    <property type="entry name" value="LSM_dom_sf"/>
</dbReference>
<dbReference type="InterPro" id="IPR047575">
    <property type="entry name" value="Sm"/>
</dbReference>
<dbReference type="InterPro" id="IPR001163">
    <property type="entry name" value="Sm_dom_euk/arc"/>
</dbReference>
<dbReference type="InterPro" id="IPR034098">
    <property type="entry name" value="Sm_G"/>
</dbReference>
<dbReference type="PANTHER" id="PTHR10553">
    <property type="entry name" value="SMALL NUCLEAR RIBONUCLEOPROTEIN"/>
    <property type="match status" value="1"/>
</dbReference>
<dbReference type="PANTHER" id="PTHR10553:SF2">
    <property type="entry name" value="SMALL NUCLEAR RIBONUCLEOPROTEIN G"/>
    <property type="match status" value="1"/>
</dbReference>
<dbReference type="Pfam" id="PF01423">
    <property type="entry name" value="LSM"/>
    <property type="match status" value="1"/>
</dbReference>
<dbReference type="SMART" id="SM00651">
    <property type="entry name" value="Sm"/>
    <property type="match status" value="1"/>
</dbReference>
<dbReference type="SUPFAM" id="SSF50182">
    <property type="entry name" value="Sm-like ribonucleoproteins"/>
    <property type="match status" value="1"/>
</dbReference>
<dbReference type="PROSITE" id="PS52002">
    <property type="entry name" value="SM"/>
    <property type="match status" value="1"/>
</dbReference>
<accession>Q54RX0</accession>
<protein>
    <recommendedName>
        <fullName>Probable small nuclear ribonucleoprotein G</fullName>
        <shortName>snRNP-G</shortName>
    </recommendedName>
    <alternativeName>
        <fullName>Sm protein G</fullName>
        <shortName>Sm-G</shortName>
        <shortName>SmG</shortName>
    </alternativeName>
</protein>
<sequence>MTFGKQADPDLTKLLDKKLAIKLNGNRTVHGILRGFDTFMNIALKDTVEVVSPTEKYEIGMVIIRGNSILLMEPLESMAYVPKTE</sequence>